<dbReference type="EMBL" id="CP001147">
    <property type="protein sequence ID" value="ACI20333.1"/>
    <property type="molecule type" value="Genomic_DNA"/>
</dbReference>
<dbReference type="RefSeq" id="WP_012545070.1">
    <property type="nucleotide sequence ID" value="NC_011296.1"/>
</dbReference>
<dbReference type="RefSeq" id="YP_002248715.1">
    <property type="nucleotide sequence ID" value="NC_011296.1"/>
</dbReference>
<dbReference type="SMR" id="B5YKF0"/>
<dbReference type="FunCoup" id="B5YKF0">
    <property type="interactions" value="218"/>
</dbReference>
<dbReference type="STRING" id="289376.THEYE_A0877"/>
<dbReference type="EnsemblBacteria" id="ACI20333">
    <property type="protein sequence ID" value="ACI20333"/>
    <property type="gene ID" value="THEYE_A0877"/>
</dbReference>
<dbReference type="KEGG" id="tye:THEYE_A0877"/>
<dbReference type="PATRIC" id="fig|289376.4.peg.864"/>
<dbReference type="eggNOG" id="COG0632">
    <property type="taxonomic scope" value="Bacteria"/>
</dbReference>
<dbReference type="HOGENOM" id="CLU_087936_3_0_0"/>
<dbReference type="InParanoid" id="B5YKF0"/>
<dbReference type="OrthoDB" id="5293449at2"/>
<dbReference type="Proteomes" id="UP000000718">
    <property type="component" value="Chromosome"/>
</dbReference>
<dbReference type="GO" id="GO:0005737">
    <property type="term" value="C:cytoplasm"/>
    <property type="evidence" value="ECO:0007669"/>
    <property type="project" value="UniProtKB-SubCell"/>
</dbReference>
<dbReference type="GO" id="GO:0009379">
    <property type="term" value="C:Holliday junction helicase complex"/>
    <property type="evidence" value="ECO:0007669"/>
    <property type="project" value="InterPro"/>
</dbReference>
<dbReference type="GO" id="GO:0048476">
    <property type="term" value="C:Holliday junction resolvase complex"/>
    <property type="evidence" value="ECO:0007669"/>
    <property type="project" value="UniProtKB-UniRule"/>
</dbReference>
<dbReference type="GO" id="GO:0005524">
    <property type="term" value="F:ATP binding"/>
    <property type="evidence" value="ECO:0007669"/>
    <property type="project" value="InterPro"/>
</dbReference>
<dbReference type="GO" id="GO:0000400">
    <property type="term" value="F:four-way junction DNA binding"/>
    <property type="evidence" value="ECO:0007669"/>
    <property type="project" value="UniProtKB-UniRule"/>
</dbReference>
<dbReference type="GO" id="GO:0009378">
    <property type="term" value="F:four-way junction helicase activity"/>
    <property type="evidence" value="ECO:0000318"/>
    <property type="project" value="GO_Central"/>
</dbReference>
<dbReference type="GO" id="GO:0006310">
    <property type="term" value="P:DNA recombination"/>
    <property type="evidence" value="ECO:0007669"/>
    <property type="project" value="UniProtKB-UniRule"/>
</dbReference>
<dbReference type="GO" id="GO:0006281">
    <property type="term" value="P:DNA repair"/>
    <property type="evidence" value="ECO:0007669"/>
    <property type="project" value="UniProtKB-UniRule"/>
</dbReference>
<dbReference type="GO" id="GO:0009432">
    <property type="term" value="P:SOS response"/>
    <property type="evidence" value="ECO:0000318"/>
    <property type="project" value="GO_Central"/>
</dbReference>
<dbReference type="CDD" id="cd14332">
    <property type="entry name" value="UBA_RuvA_C"/>
    <property type="match status" value="1"/>
</dbReference>
<dbReference type="Gene3D" id="1.10.150.20">
    <property type="entry name" value="5' to 3' exonuclease, C-terminal subdomain"/>
    <property type="match status" value="1"/>
</dbReference>
<dbReference type="Gene3D" id="1.10.8.10">
    <property type="entry name" value="DNA helicase RuvA subunit, C-terminal domain"/>
    <property type="match status" value="1"/>
</dbReference>
<dbReference type="Gene3D" id="2.40.50.140">
    <property type="entry name" value="Nucleic acid-binding proteins"/>
    <property type="match status" value="1"/>
</dbReference>
<dbReference type="HAMAP" id="MF_00031">
    <property type="entry name" value="DNA_HJ_migration_RuvA"/>
    <property type="match status" value="1"/>
</dbReference>
<dbReference type="InterPro" id="IPR013849">
    <property type="entry name" value="DNA_helicase_Holl-junc_RuvA_I"/>
</dbReference>
<dbReference type="InterPro" id="IPR003583">
    <property type="entry name" value="Hlx-hairpin-Hlx_DNA-bd_motif"/>
</dbReference>
<dbReference type="InterPro" id="IPR012340">
    <property type="entry name" value="NA-bd_OB-fold"/>
</dbReference>
<dbReference type="InterPro" id="IPR000085">
    <property type="entry name" value="RuvA"/>
</dbReference>
<dbReference type="InterPro" id="IPR010994">
    <property type="entry name" value="RuvA_2-like"/>
</dbReference>
<dbReference type="InterPro" id="IPR011114">
    <property type="entry name" value="RuvA_C"/>
</dbReference>
<dbReference type="InterPro" id="IPR036267">
    <property type="entry name" value="RuvA_C_sf"/>
</dbReference>
<dbReference type="NCBIfam" id="TIGR00084">
    <property type="entry name" value="ruvA"/>
    <property type="match status" value="1"/>
</dbReference>
<dbReference type="Pfam" id="PF14520">
    <property type="entry name" value="HHH_5"/>
    <property type="match status" value="1"/>
</dbReference>
<dbReference type="Pfam" id="PF07499">
    <property type="entry name" value="RuvA_C"/>
    <property type="match status" value="1"/>
</dbReference>
<dbReference type="Pfam" id="PF01330">
    <property type="entry name" value="RuvA_N"/>
    <property type="match status" value="1"/>
</dbReference>
<dbReference type="SMART" id="SM00278">
    <property type="entry name" value="HhH1"/>
    <property type="match status" value="2"/>
</dbReference>
<dbReference type="SUPFAM" id="SSF46929">
    <property type="entry name" value="DNA helicase RuvA subunit, C-terminal domain"/>
    <property type="match status" value="1"/>
</dbReference>
<dbReference type="SUPFAM" id="SSF50249">
    <property type="entry name" value="Nucleic acid-binding proteins"/>
    <property type="match status" value="1"/>
</dbReference>
<dbReference type="SUPFAM" id="SSF47781">
    <property type="entry name" value="RuvA domain 2-like"/>
    <property type="match status" value="1"/>
</dbReference>
<protein>
    <recommendedName>
        <fullName evidence="1">Holliday junction branch migration complex subunit RuvA</fullName>
    </recommendedName>
</protein>
<name>RUVA_THEYD</name>
<keyword id="KW-0963">Cytoplasm</keyword>
<keyword id="KW-0227">DNA damage</keyword>
<keyword id="KW-0233">DNA recombination</keyword>
<keyword id="KW-0234">DNA repair</keyword>
<keyword id="KW-0238">DNA-binding</keyword>
<keyword id="KW-1185">Reference proteome</keyword>
<proteinExistence type="inferred from homology"/>
<comment type="function">
    <text evidence="1">The RuvA-RuvB-RuvC complex processes Holliday junction (HJ) DNA during genetic recombination and DNA repair, while the RuvA-RuvB complex plays an important role in the rescue of blocked DNA replication forks via replication fork reversal (RFR). RuvA specifically binds to HJ cruciform DNA, conferring on it an open structure. The RuvB hexamer acts as an ATP-dependent pump, pulling dsDNA into and through the RuvAB complex. HJ branch migration allows RuvC to scan DNA until it finds its consensus sequence, where it cleaves and resolves the cruciform DNA.</text>
</comment>
<comment type="subunit">
    <text evidence="1">Homotetramer. Forms an RuvA(8)-RuvB(12)-Holliday junction (HJ) complex. HJ DNA is sandwiched between 2 RuvA tetramers; dsDNA enters through RuvA and exits via RuvB. An RuvB hexamer assembles on each DNA strand where it exits the tetramer. Each RuvB hexamer is contacted by two RuvA subunits (via domain III) on 2 adjacent RuvB subunits; this complex drives branch migration. In the full resolvosome a probable DNA-RuvA(4)-RuvB(12)-RuvC(2) complex forms which resolves the HJ.</text>
</comment>
<comment type="subcellular location">
    <subcellularLocation>
        <location evidence="1">Cytoplasm</location>
    </subcellularLocation>
</comment>
<comment type="domain">
    <text evidence="1">Has three domains with a flexible linker between the domains II and III and assumes an 'L' shape. Domain III is highly mobile and contacts RuvB.</text>
</comment>
<comment type="similarity">
    <text evidence="1">Belongs to the RuvA family.</text>
</comment>
<sequence length="190" mass="21621">MLDFIKGKVITVKPDKIVIQTGGIGYSVKIPIRVSRYINRDEETQIFTSLIVKEESIEIYGFLESSERDLFEELIKIAGIGPKMAINILSTYDRETLYKIIDHEDIKSLSKIPGIGKKTAQRILLELRGILPSLQYEKDQKYDDILSALLNLGYKRLEAKEVLDKIYNNEKDEATIIRESLSILAGKDGK</sequence>
<accession>B5YKF0</accession>
<reference key="1">
    <citation type="submission" date="2008-08" db="EMBL/GenBank/DDBJ databases">
        <title>The complete genome sequence of Thermodesulfovibrio yellowstonii strain ATCC 51303 / DSM 11347 / YP87.</title>
        <authorList>
            <person name="Dodson R.J."/>
            <person name="Durkin A.S."/>
            <person name="Wu M."/>
            <person name="Eisen J."/>
            <person name="Sutton G."/>
        </authorList>
    </citation>
    <scope>NUCLEOTIDE SEQUENCE [LARGE SCALE GENOMIC DNA]</scope>
    <source>
        <strain>ATCC 51303 / DSM 11347 / YP87</strain>
    </source>
</reference>
<evidence type="ECO:0000255" key="1">
    <source>
        <dbReference type="HAMAP-Rule" id="MF_00031"/>
    </source>
</evidence>
<organism>
    <name type="scientific">Thermodesulfovibrio yellowstonii (strain ATCC 51303 / DSM 11347 / YP87)</name>
    <dbReference type="NCBI Taxonomy" id="289376"/>
    <lineage>
        <taxon>Bacteria</taxon>
        <taxon>Pseudomonadati</taxon>
        <taxon>Nitrospirota</taxon>
        <taxon>Thermodesulfovibrionia</taxon>
        <taxon>Thermodesulfovibrionales</taxon>
        <taxon>Thermodesulfovibrionaceae</taxon>
        <taxon>Thermodesulfovibrio</taxon>
    </lineage>
</organism>
<gene>
    <name evidence="1" type="primary">ruvA</name>
    <name type="ordered locus">THEYE_A0877</name>
</gene>
<feature type="chain" id="PRO_1000090382" description="Holliday junction branch migration complex subunit RuvA">
    <location>
        <begin position="1"/>
        <end position="190"/>
    </location>
</feature>
<feature type="region of interest" description="Domain I" evidence="1">
    <location>
        <begin position="1"/>
        <end position="63"/>
    </location>
</feature>
<feature type="region of interest" description="Domain II" evidence="1">
    <location>
        <begin position="64"/>
        <end position="139"/>
    </location>
</feature>
<feature type="region of interest" description="Domain III" evidence="1">
    <location>
        <begin position="139"/>
        <end position="190"/>
    </location>
</feature>
<feature type="region of interest" description="Flexible linker" evidence="1">
    <location>
        <position position="139"/>
    </location>
</feature>